<reference key="1">
    <citation type="journal article" date="2004" name="Proc. Natl. Acad. Sci. U.S.A.">
        <title>The louse-borne human pathogen Bartonella quintana is a genomic derivative of the zoonotic agent Bartonella henselae.</title>
        <authorList>
            <person name="Alsmark U.C.M."/>
            <person name="Frank A.C."/>
            <person name="Karlberg E.O."/>
            <person name="Legault B.-A."/>
            <person name="Ardell D.H."/>
            <person name="Canbaeck B."/>
            <person name="Eriksson A.-S."/>
            <person name="Naeslund A.K."/>
            <person name="Handley S.A."/>
            <person name="Huvet M."/>
            <person name="La Scola B."/>
            <person name="Holmberg M."/>
            <person name="Andersson S.G.E."/>
        </authorList>
    </citation>
    <scope>NUCLEOTIDE SEQUENCE [LARGE SCALE GENOMIC DNA]</scope>
    <source>
        <strain>ATCC 49882 / DSM 28221 / CCUG 30454 / Houston 1</strain>
    </source>
</reference>
<accession>Q6G5C7</accession>
<proteinExistence type="inferred from homology"/>
<sequence length="239" mass="25147">MTLALQYKRILLKVSGEALMGGQSFGIDVSVADRIAADIAEVRAIGVEVAIVIGGGNIFRGVAVASHGGDRVTGDHMGMLATAINSLALRTSLTKLGVETVVLSAIAMPQICESFSQRKAIGYMNQGRVVIFAGGTGNPFFTTDSAATLRAAEIGADVLLKGTQVDGIYSADPKTDPTAKRFDRLTHVEILQRGLSVMDTTAVTLARENNVPIIVYSIHEKSGLAKVLNGTGRFTIVSE</sequence>
<name>PYRH_BARHE</name>
<evidence type="ECO:0000255" key="1">
    <source>
        <dbReference type="HAMAP-Rule" id="MF_01220"/>
    </source>
</evidence>
<feature type="chain" id="PRO_1000053894" description="Uridylate kinase">
    <location>
        <begin position="1"/>
        <end position="239"/>
    </location>
</feature>
<feature type="binding site" evidence="1">
    <location>
        <begin position="13"/>
        <end position="16"/>
    </location>
    <ligand>
        <name>ATP</name>
        <dbReference type="ChEBI" id="CHEBI:30616"/>
    </ligand>
</feature>
<feature type="binding site" evidence="1">
    <location>
        <position position="55"/>
    </location>
    <ligand>
        <name>UMP</name>
        <dbReference type="ChEBI" id="CHEBI:57865"/>
    </ligand>
</feature>
<feature type="binding site" evidence="1">
    <location>
        <position position="56"/>
    </location>
    <ligand>
        <name>ATP</name>
        <dbReference type="ChEBI" id="CHEBI:30616"/>
    </ligand>
</feature>
<feature type="binding site" evidence="1">
    <location>
        <position position="60"/>
    </location>
    <ligand>
        <name>ATP</name>
        <dbReference type="ChEBI" id="CHEBI:30616"/>
    </ligand>
</feature>
<feature type="binding site" evidence="1">
    <location>
        <position position="75"/>
    </location>
    <ligand>
        <name>UMP</name>
        <dbReference type="ChEBI" id="CHEBI:57865"/>
    </ligand>
</feature>
<feature type="binding site" evidence="1">
    <location>
        <begin position="136"/>
        <end position="143"/>
    </location>
    <ligand>
        <name>UMP</name>
        <dbReference type="ChEBI" id="CHEBI:57865"/>
    </ligand>
</feature>
<feature type="binding site" evidence="1">
    <location>
        <position position="163"/>
    </location>
    <ligand>
        <name>ATP</name>
        <dbReference type="ChEBI" id="CHEBI:30616"/>
    </ligand>
</feature>
<feature type="binding site" evidence="1">
    <location>
        <position position="164"/>
    </location>
    <ligand>
        <name>ATP</name>
        <dbReference type="ChEBI" id="CHEBI:30616"/>
    </ligand>
</feature>
<feature type="binding site" evidence="1">
    <location>
        <position position="169"/>
    </location>
    <ligand>
        <name>ATP</name>
        <dbReference type="ChEBI" id="CHEBI:30616"/>
    </ligand>
</feature>
<feature type="binding site" evidence="1">
    <location>
        <position position="172"/>
    </location>
    <ligand>
        <name>ATP</name>
        <dbReference type="ChEBI" id="CHEBI:30616"/>
    </ligand>
</feature>
<dbReference type="EC" id="2.7.4.22" evidence="1"/>
<dbReference type="EMBL" id="BX897699">
    <property type="protein sequence ID" value="CAF27428.1"/>
    <property type="molecule type" value="Genomic_DNA"/>
</dbReference>
<dbReference type="RefSeq" id="WP_011180548.1">
    <property type="nucleotide sequence ID" value="NZ_LRIJ02000001.1"/>
</dbReference>
<dbReference type="SMR" id="Q6G5C7"/>
<dbReference type="PaxDb" id="283166-BH06240"/>
<dbReference type="EnsemblBacteria" id="CAF27428">
    <property type="protein sequence ID" value="CAF27428"/>
    <property type="gene ID" value="BH06240"/>
</dbReference>
<dbReference type="GeneID" id="92985650"/>
<dbReference type="KEGG" id="bhe:BH06240"/>
<dbReference type="eggNOG" id="COG0528">
    <property type="taxonomic scope" value="Bacteria"/>
</dbReference>
<dbReference type="OrthoDB" id="9807458at2"/>
<dbReference type="UniPathway" id="UPA00159">
    <property type="reaction ID" value="UER00275"/>
</dbReference>
<dbReference type="Proteomes" id="UP000000421">
    <property type="component" value="Chromosome"/>
</dbReference>
<dbReference type="GO" id="GO:0005829">
    <property type="term" value="C:cytosol"/>
    <property type="evidence" value="ECO:0007669"/>
    <property type="project" value="TreeGrafter"/>
</dbReference>
<dbReference type="GO" id="GO:0005524">
    <property type="term" value="F:ATP binding"/>
    <property type="evidence" value="ECO:0007669"/>
    <property type="project" value="UniProtKB-KW"/>
</dbReference>
<dbReference type="GO" id="GO:0033862">
    <property type="term" value="F:UMP kinase activity"/>
    <property type="evidence" value="ECO:0007669"/>
    <property type="project" value="UniProtKB-EC"/>
</dbReference>
<dbReference type="GO" id="GO:0044210">
    <property type="term" value="P:'de novo' CTP biosynthetic process"/>
    <property type="evidence" value="ECO:0007669"/>
    <property type="project" value="UniProtKB-UniRule"/>
</dbReference>
<dbReference type="GO" id="GO:0006225">
    <property type="term" value="P:UDP biosynthetic process"/>
    <property type="evidence" value="ECO:0007669"/>
    <property type="project" value="TreeGrafter"/>
</dbReference>
<dbReference type="CDD" id="cd04254">
    <property type="entry name" value="AAK_UMPK-PyrH-Ec"/>
    <property type="match status" value="1"/>
</dbReference>
<dbReference type="FunFam" id="3.40.1160.10:FF:000001">
    <property type="entry name" value="Uridylate kinase"/>
    <property type="match status" value="1"/>
</dbReference>
<dbReference type="Gene3D" id="3.40.1160.10">
    <property type="entry name" value="Acetylglutamate kinase-like"/>
    <property type="match status" value="1"/>
</dbReference>
<dbReference type="HAMAP" id="MF_01220_B">
    <property type="entry name" value="PyrH_B"/>
    <property type="match status" value="1"/>
</dbReference>
<dbReference type="InterPro" id="IPR036393">
    <property type="entry name" value="AceGlu_kinase-like_sf"/>
</dbReference>
<dbReference type="InterPro" id="IPR001048">
    <property type="entry name" value="Asp/Glu/Uridylate_kinase"/>
</dbReference>
<dbReference type="InterPro" id="IPR011817">
    <property type="entry name" value="Uridylate_kinase"/>
</dbReference>
<dbReference type="InterPro" id="IPR015963">
    <property type="entry name" value="Uridylate_kinase_bac"/>
</dbReference>
<dbReference type="NCBIfam" id="TIGR02075">
    <property type="entry name" value="pyrH_bact"/>
    <property type="match status" value="1"/>
</dbReference>
<dbReference type="PANTHER" id="PTHR42833">
    <property type="entry name" value="URIDYLATE KINASE"/>
    <property type="match status" value="1"/>
</dbReference>
<dbReference type="PANTHER" id="PTHR42833:SF4">
    <property type="entry name" value="URIDYLATE KINASE PUMPKIN, CHLOROPLASTIC"/>
    <property type="match status" value="1"/>
</dbReference>
<dbReference type="Pfam" id="PF00696">
    <property type="entry name" value="AA_kinase"/>
    <property type="match status" value="1"/>
</dbReference>
<dbReference type="PIRSF" id="PIRSF005650">
    <property type="entry name" value="Uridylate_kin"/>
    <property type="match status" value="1"/>
</dbReference>
<dbReference type="SUPFAM" id="SSF53633">
    <property type="entry name" value="Carbamate kinase-like"/>
    <property type="match status" value="1"/>
</dbReference>
<gene>
    <name evidence="1" type="primary">pyrH</name>
    <name type="ordered locus">BH06240</name>
</gene>
<keyword id="KW-0067">ATP-binding</keyword>
<keyword id="KW-0963">Cytoplasm</keyword>
<keyword id="KW-0418">Kinase</keyword>
<keyword id="KW-0547">Nucleotide-binding</keyword>
<keyword id="KW-0665">Pyrimidine biosynthesis</keyword>
<keyword id="KW-0808">Transferase</keyword>
<comment type="function">
    <text evidence="1">Catalyzes the reversible phosphorylation of UMP to UDP.</text>
</comment>
<comment type="catalytic activity">
    <reaction evidence="1">
        <text>UMP + ATP = UDP + ADP</text>
        <dbReference type="Rhea" id="RHEA:24400"/>
        <dbReference type="ChEBI" id="CHEBI:30616"/>
        <dbReference type="ChEBI" id="CHEBI:57865"/>
        <dbReference type="ChEBI" id="CHEBI:58223"/>
        <dbReference type="ChEBI" id="CHEBI:456216"/>
        <dbReference type="EC" id="2.7.4.22"/>
    </reaction>
</comment>
<comment type="activity regulation">
    <text evidence="1">Inhibited by UTP.</text>
</comment>
<comment type="pathway">
    <text evidence="1">Pyrimidine metabolism; CTP biosynthesis via de novo pathway; UDP from UMP (UMPK route): step 1/1.</text>
</comment>
<comment type="subunit">
    <text evidence="1">Homohexamer.</text>
</comment>
<comment type="subcellular location">
    <subcellularLocation>
        <location evidence="1">Cytoplasm</location>
    </subcellularLocation>
</comment>
<comment type="similarity">
    <text evidence="1">Belongs to the UMP kinase family.</text>
</comment>
<organism>
    <name type="scientific">Bartonella henselae (strain ATCC 49882 / DSM 28221 / CCUG 30454 / Houston 1)</name>
    <name type="common">Rochalimaea henselae</name>
    <dbReference type="NCBI Taxonomy" id="283166"/>
    <lineage>
        <taxon>Bacteria</taxon>
        <taxon>Pseudomonadati</taxon>
        <taxon>Pseudomonadota</taxon>
        <taxon>Alphaproteobacteria</taxon>
        <taxon>Hyphomicrobiales</taxon>
        <taxon>Bartonellaceae</taxon>
        <taxon>Bartonella</taxon>
    </lineage>
</organism>
<protein>
    <recommendedName>
        <fullName evidence="1">Uridylate kinase</fullName>
        <shortName evidence="1">UK</shortName>
        <ecNumber evidence="1">2.7.4.22</ecNumber>
    </recommendedName>
    <alternativeName>
        <fullName evidence="1">Uridine monophosphate kinase</fullName>
        <shortName evidence="1">UMP kinase</shortName>
        <shortName evidence="1">UMPK</shortName>
    </alternativeName>
</protein>